<reference evidence="9" key="1">
    <citation type="journal article" date="1998" name="Science">
        <title>Genome sequence of the nematode C. elegans: a platform for investigating biology.</title>
        <authorList>
            <consortium name="The C. elegans sequencing consortium"/>
        </authorList>
    </citation>
    <scope>NUCLEOTIDE SEQUENCE [LARGE SCALE GENOMIC DNA]</scope>
    <source>
        <strain evidence="9">Bristol N2</strain>
    </source>
</reference>
<reference evidence="8" key="2">
    <citation type="journal article" date="2000" name="Genes Dev.">
        <title>The forkhead domain gene unc-130 generates chemosensory neuron diversity in C. elegans.</title>
        <authorList>
            <person name="Sarafi-Reinach T.R."/>
            <person name="Sengupta P."/>
        </authorList>
    </citation>
    <scope>FUNCTION</scope>
    <scope>SUBCELLULAR LOCATION</scope>
    <scope>DEVELOPMENTAL STAGE</scope>
    <scope>MUTAGENESIS OF ARG-218</scope>
</reference>
<reference evidence="8" key="3">
    <citation type="journal article" date="2000" name="Genes Dev.">
        <title>The forkhead transcription factor UNC-130 is required for the graded spatial expression of the UNC-129 TGF-beta guidance factor in C. elegans.</title>
        <authorList>
            <person name="Nash B."/>
            <person name="Colavita A."/>
            <person name="Zheng H."/>
            <person name="Roy P.J."/>
            <person name="Culotti J.G."/>
        </authorList>
    </citation>
    <scope>FUNCTION</scope>
    <scope>TISSUE SPECIFICITY</scope>
    <scope>DEVELOPMENTAL STAGE</scope>
    <scope>MUTAGENESIS OF ARG-218</scope>
</reference>
<reference key="4">
    <citation type="journal article" date="2012" name="Mol. Cell">
        <title>Promoters recognized by forkhead proteins exist for individual 21U-RNAs.</title>
        <authorList>
            <person name="Cecere G."/>
            <person name="Zheng G.X."/>
            <person name="Mansisidor A.R."/>
            <person name="Klymko K.E."/>
            <person name="Grishok A."/>
        </authorList>
    </citation>
    <scope>FUNCTION</scope>
</reference>
<reference evidence="8" key="5">
    <citation type="journal article" date="2016" name="Dev. Biol.">
        <title>Regulation of UNC-130/FOXD-mediated mesodermal patterning in C. elegans.</title>
        <authorList>
            <person name="Kersey R.K."/>
            <person name="Brodigan T.M."/>
            <person name="Fukushige T."/>
            <person name="Krause M.W."/>
        </authorList>
    </citation>
    <scope>FUNCTION</scope>
    <scope>DEVELOPMENTAL STAGE</scope>
    <scope>DISRUPTION PHENOTYPE</scope>
    <scope>MUTAGENESIS OF ARG-218</scope>
</reference>
<reference key="6">
    <citation type="journal article" date="2018" name="Dev. Biol.">
        <title>The forkhead transcription factor UNC-130/FOXD integrates both BMP and Notch signaling to regulate dorsoventral patterning of the C. elegans postembryonic mesoderm.</title>
        <authorList>
            <person name="Shen Q."/>
            <person name="Toulabi L.B."/>
            <person name="Shi H."/>
            <person name="Nicklow E.E."/>
            <person name="Liu J."/>
        </authorList>
    </citation>
    <scope>FUNCTION</scope>
    <scope>DEVELOPMENTAL STAGE</scope>
</reference>
<name>UN130_CAEEL</name>
<gene>
    <name evidence="10" type="primary">unc-130</name>
    <name evidence="10" type="ORF">C47G2.2</name>
</gene>
<keyword id="KW-0238">DNA-binding</keyword>
<keyword id="KW-0539">Nucleus</keyword>
<keyword id="KW-1185">Reference proteome</keyword>
<keyword id="KW-0804">Transcription</keyword>
<keyword id="KW-0805">Transcription regulation</keyword>
<sequence>MLFSMESILSSTKPKLEPPPKLEPEVTINEQVVDLPRSNTRLSEPSTSASVLEHDLKFGESRKRSRSLGDEPTEDEDGVPVRKANKRNHSTSSAADSSSDDAKDDDDDDDSTSRKSMSGHRKSSHAKPPYSYIALIAMSILNSPEKKLTLSEICEFIINKFEYYKEKFPAWQNSIRHNLSLNDCFVKVARGPGNPGKGNYWALDPNCEDMFDNGSFLRRRKRYKKNSDTYHEMMSHHPMPFPPFLPQGMPFPPRMMHPMANIPMLGHPMNPRAVPNMPAFFIPQNIDSQKLLSMMASRIMPMDAPVSSGQKRTSSSSSPNENGSSAVSDKLSA</sequence>
<feature type="chain" id="PRO_0000451993" description="Forkhead box protein unc-130">
    <location>
        <begin position="1"/>
        <end position="333"/>
    </location>
</feature>
<feature type="DNA-binding region" description="Fork-head" evidence="1">
    <location>
        <begin position="127"/>
        <end position="221"/>
    </location>
</feature>
<feature type="region of interest" description="Disordered" evidence="2">
    <location>
        <begin position="1"/>
        <end position="126"/>
    </location>
</feature>
<feature type="region of interest" description="Disordered" evidence="2">
    <location>
        <begin position="304"/>
        <end position="333"/>
    </location>
</feature>
<feature type="compositionally biased region" description="Basic and acidic residues" evidence="2">
    <location>
        <begin position="14"/>
        <end position="24"/>
    </location>
</feature>
<feature type="compositionally biased region" description="Polar residues" evidence="2">
    <location>
        <begin position="37"/>
        <end position="50"/>
    </location>
</feature>
<feature type="compositionally biased region" description="Basic and acidic residues" evidence="2">
    <location>
        <begin position="52"/>
        <end position="62"/>
    </location>
</feature>
<feature type="compositionally biased region" description="Acidic residues" evidence="2">
    <location>
        <begin position="98"/>
        <end position="110"/>
    </location>
</feature>
<feature type="compositionally biased region" description="Low complexity" evidence="2">
    <location>
        <begin position="307"/>
        <end position="333"/>
    </location>
</feature>
<feature type="mutagenesis site" description="In oy10 and ev582; Ectopic expression of odr-7 in an additional pair of cells which adopt an AWA-like sensory neuron fate. Ectopic expression of unc-129 at equal levels in dorsal and ventral body-wall muscle (BWM). Defects in migration of distal tip cells (DTC). Does not bind to unc-129 promoter in vitro." evidence="3 4 6">
    <original>R</original>
    <variation>C</variation>
    <location>
        <position position="218"/>
    </location>
</feature>
<comment type="function">
    <text evidence="3 4 5 6 7">Probable transcription factor (PubMed:11018016, PubMed:27341757). Binds to DNA sequence motif 5'-CTGTTTCA-3' (PubMed:22819322). Required for the migration of distal tip cells (DTC) and axonal growth-cones along the dorsal-ventral axis of the body wall, acting by cell autonomous repression of unc-129/TGF-beta expression in ventral body muscle during embyogenesis (PubMed:11018016, PubMed:27341757). Binds to the promoter region of the unc-129 gene (PubMed:11018016). Plays a role in dorsal-ventral patterning and fate specification of the postembryonic mesoderm (PubMed:29155044). Involved in male tail morphogenesis and in embryogenesis (PubMed:11018016). Plays a role in the development of sensory neurons and is required to repress AWA fate and promote ASG fate in the ASG chemosensory neurons (PubMed:11018015). Regulates expression of a class of small RNAs, known as 21U-RNAs.</text>
</comment>
<comment type="interaction">
    <interactant intactId="EBI-2414897">
        <id>Q18694</id>
    </interactant>
    <interactant intactId="EBI-317870">
        <id>Q10666</id>
        <label>pop-1</label>
    </interactant>
    <organismsDiffer>false</organismsDiffer>
    <experiments>3</experiments>
</comment>
<comment type="interaction">
    <interactant intactId="EBI-2414897">
        <id>Q18694</id>
    </interactant>
    <interactant intactId="EBI-314716">
        <id>O02482</id>
        <label>unc-37</label>
    </interactant>
    <organismsDiffer>false</organismsDiffer>
    <experiments>3</experiments>
</comment>
<comment type="subcellular location">
    <subcellularLocation>
        <location evidence="1 3">Nucleus</location>
    </subcellularLocation>
</comment>
<comment type="tissue specificity">
    <text evidence="4">Expressed in ventral body wall muscle (PubMed:11018016). Expressed in the structural cells and two neurons of each ray in the male tail (PubMed:11018016).</text>
</comment>
<comment type="developmental stage">
    <text evidence="3 4 6 7">Expressed strongly in embryos and L1 larvae, but severely reduced or absent in later larval and adult stages (at the protein level) (PubMed:11018015). Expressed widely in embryogenesis, including ABp(l/r)aapapp cells, which are precursors to the AIB interneurons and the ASI chemosensory neurons, hypodermal cells hyp4, hyp5, hyp6, hyp7, H0, H1, and ABp(l/r)aapapa cells, which give rise to the AWA and ASG sensory neurons (at the protein level) (PubMed:11018015). Expression in the postembryonic M lineage is asymmetric; beginning at the 8-M stage and continuing through the 18-M stage, expressed in all the ventral, but not dorsal, M lineage cells (PubMed:29155044). Expressed dynamically during embryogenesis in head hypodermal cells, as well as in ventral body wall muscle (BWM) and intestinal precursor cells (PubMed:11018016, PubMed:27341757). Expression not detected in any dorsal BWM or its precursor during embryogenesis (PubMed:27341757).</text>
</comment>
<comment type="disruption phenotype">
    <text evidence="6">RNAi-mediated knockdown resulted in de-repression of unc-129 expression in ventral body wall muscle (BWM).</text>
</comment>
<proteinExistence type="evidence at protein level"/>
<evidence type="ECO:0000255" key="1">
    <source>
        <dbReference type="PROSITE-ProRule" id="PRU00089"/>
    </source>
</evidence>
<evidence type="ECO:0000256" key="2">
    <source>
        <dbReference type="SAM" id="MobiDB-lite"/>
    </source>
</evidence>
<evidence type="ECO:0000269" key="3">
    <source>
    </source>
</evidence>
<evidence type="ECO:0000269" key="4">
    <source>
    </source>
</evidence>
<evidence type="ECO:0000269" key="5">
    <source>
    </source>
</evidence>
<evidence type="ECO:0000269" key="6">
    <source>
    </source>
</evidence>
<evidence type="ECO:0000269" key="7">
    <source>
    </source>
</evidence>
<evidence type="ECO:0000305" key="8"/>
<evidence type="ECO:0000312" key="9">
    <source>
        <dbReference type="Proteomes" id="UP000001940"/>
    </source>
</evidence>
<evidence type="ECO:0000312" key="10">
    <source>
        <dbReference type="WormBase" id="C47G2.2"/>
    </source>
</evidence>
<organism evidence="9">
    <name type="scientific">Caenorhabditis elegans</name>
    <dbReference type="NCBI Taxonomy" id="6239"/>
    <lineage>
        <taxon>Eukaryota</taxon>
        <taxon>Metazoa</taxon>
        <taxon>Ecdysozoa</taxon>
        <taxon>Nematoda</taxon>
        <taxon>Chromadorea</taxon>
        <taxon>Rhabditida</taxon>
        <taxon>Rhabditina</taxon>
        <taxon>Rhabditomorpha</taxon>
        <taxon>Rhabditoidea</taxon>
        <taxon>Rhabditidae</taxon>
        <taxon>Peloderinae</taxon>
        <taxon>Caenorhabditis</taxon>
    </lineage>
</organism>
<dbReference type="EMBL" id="BX284602">
    <property type="protein sequence ID" value="CAA88935.1"/>
    <property type="molecule type" value="Genomic_DNA"/>
</dbReference>
<dbReference type="PIR" id="T20033">
    <property type="entry name" value="T20033"/>
</dbReference>
<dbReference type="RefSeq" id="NP_496411.1">
    <property type="nucleotide sequence ID" value="NM_064010.5"/>
</dbReference>
<dbReference type="SMR" id="Q18694"/>
<dbReference type="FunCoup" id="Q18694">
    <property type="interactions" value="118"/>
</dbReference>
<dbReference type="IntAct" id="Q18694">
    <property type="interactions" value="24"/>
</dbReference>
<dbReference type="STRING" id="6239.C47G2.2.1"/>
<dbReference type="PaxDb" id="6239-C47G2.2"/>
<dbReference type="EnsemblMetazoa" id="C47G2.2.1">
    <property type="protein sequence ID" value="C47G2.2.1"/>
    <property type="gene ID" value="WBGene00006853"/>
</dbReference>
<dbReference type="GeneID" id="174721"/>
<dbReference type="KEGG" id="cel:CELE_C47G2.2"/>
<dbReference type="UCSC" id="C47G2.2">
    <property type="organism name" value="c. elegans"/>
</dbReference>
<dbReference type="AGR" id="WB:WBGene00006853"/>
<dbReference type="CTD" id="174721"/>
<dbReference type="WormBase" id="C47G2.2">
    <property type="protein sequence ID" value="CE02166"/>
    <property type="gene ID" value="WBGene00006853"/>
    <property type="gene designation" value="unc-130"/>
</dbReference>
<dbReference type="eggNOG" id="KOG2294">
    <property type="taxonomic scope" value="Eukaryota"/>
</dbReference>
<dbReference type="GeneTree" id="ENSGT00940000168146"/>
<dbReference type="HOGENOM" id="CLU_837396_0_0_1"/>
<dbReference type="InParanoid" id="Q18694"/>
<dbReference type="OMA" id="MLFSMES"/>
<dbReference type="OrthoDB" id="5402974at2759"/>
<dbReference type="SignaLink" id="Q18694"/>
<dbReference type="PRO" id="PR:Q18694"/>
<dbReference type="Proteomes" id="UP000001940">
    <property type="component" value="Chromosome II"/>
</dbReference>
<dbReference type="Bgee" id="WBGene00006853">
    <property type="expression patterns" value="Expressed in embryo and 3 other cell types or tissues"/>
</dbReference>
<dbReference type="GO" id="GO:0005634">
    <property type="term" value="C:nucleus"/>
    <property type="evidence" value="ECO:0000314"/>
    <property type="project" value="WormBase"/>
</dbReference>
<dbReference type="GO" id="GO:0003700">
    <property type="term" value="F:DNA-binding transcription factor activity"/>
    <property type="evidence" value="ECO:0000250"/>
    <property type="project" value="WormBase"/>
</dbReference>
<dbReference type="GO" id="GO:0000981">
    <property type="term" value="F:DNA-binding transcription factor activity, RNA polymerase II-specific"/>
    <property type="evidence" value="ECO:0000318"/>
    <property type="project" value="GO_Central"/>
</dbReference>
<dbReference type="GO" id="GO:0000978">
    <property type="term" value="F:RNA polymerase II cis-regulatory region sequence-specific DNA binding"/>
    <property type="evidence" value="ECO:0000318"/>
    <property type="project" value="GO_Central"/>
</dbReference>
<dbReference type="GO" id="GO:0000977">
    <property type="term" value="F:RNA polymerase II transcription regulatory region sequence-specific DNA binding"/>
    <property type="evidence" value="ECO:0000314"/>
    <property type="project" value="WormBase"/>
</dbReference>
<dbReference type="GO" id="GO:0003714">
    <property type="term" value="F:transcription corepressor activity"/>
    <property type="evidence" value="ECO:0000315"/>
    <property type="project" value="WormBase"/>
</dbReference>
<dbReference type="GO" id="GO:0009653">
    <property type="term" value="P:anatomical structure morphogenesis"/>
    <property type="evidence" value="ECO:0000318"/>
    <property type="project" value="GO_Central"/>
</dbReference>
<dbReference type="GO" id="GO:0048846">
    <property type="term" value="P:axon extension involved in axon guidance"/>
    <property type="evidence" value="ECO:0000315"/>
    <property type="project" value="WormBase"/>
</dbReference>
<dbReference type="GO" id="GO:0030154">
    <property type="term" value="P:cell differentiation"/>
    <property type="evidence" value="ECO:0000318"/>
    <property type="project" value="GO_Central"/>
</dbReference>
<dbReference type="GO" id="GO:0009792">
    <property type="term" value="P:embryo development ending in birth or egg hatching"/>
    <property type="evidence" value="ECO:0000315"/>
    <property type="project" value="WormBase"/>
</dbReference>
<dbReference type="GO" id="GO:0045185">
    <property type="term" value="P:maintenance of protein location"/>
    <property type="evidence" value="ECO:0000315"/>
    <property type="project" value="WormBase"/>
</dbReference>
<dbReference type="GO" id="GO:0000122">
    <property type="term" value="P:negative regulation of transcription by RNA polymerase II"/>
    <property type="evidence" value="ECO:0000315"/>
    <property type="project" value="WormBase"/>
</dbReference>
<dbReference type="GO" id="GO:0045138">
    <property type="term" value="P:nematode male tail tip morphogenesis"/>
    <property type="evidence" value="ECO:0000315"/>
    <property type="project" value="WormBase"/>
</dbReference>
<dbReference type="GO" id="GO:0007399">
    <property type="term" value="P:nervous system development"/>
    <property type="evidence" value="ECO:0000315"/>
    <property type="project" value="WormBase"/>
</dbReference>
<dbReference type="GO" id="GO:0042661">
    <property type="term" value="P:regulation of mesodermal cell fate specification"/>
    <property type="evidence" value="ECO:0000315"/>
    <property type="project" value="UniProtKB"/>
</dbReference>
<dbReference type="GO" id="GO:0006357">
    <property type="term" value="P:regulation of transcription by RNA polymerase II"/>
    <property type="evidence" value="ECO:0000318"/>
    <property type="project" value="GO_Central"/>
</dbReference>
<dbReference type="FunFam" id="1.10.10.10:FF:000016">
    <property type="entry name" value="Forkhead box protein I1"/>
    <property type="match status" value="1"/>
</dbReference>
<dbReference type="Gene3D" id="1.10.10.10">
    <property type="entry name" value="Winged helix-like DNA-binding domain superfamily/Winged helix DNA-binding domain"/>
    <property type="match status" value="1"/>
</dbReference>
<dbReference type="InterPro" id="IPR001766">
    <property type="entry name" value="Fork_head_dom"/>
</dbReference>
<dbReference type="InterPro" id="IPR050211">
    <property type="entry name" value="FOX_domain-containing"/>
</dbReference>
<dbReference type="InterPro" id="IPR030456">
    <property type="entry name" value="TF_fork_head_CS_2"/>
</dbReference>
<dbReference type="InterPro" id="IPR036388">
    <property type="entry name" value="WH-like_DNA-bd_sf"/>
</dbReference>
<dbReference type="InterPro" id="IPR036390">
    <property type="entry name" value="WH_DNA-bd_sf"/>
</dbReference>
<dbReference type="PANTHER" id="PTHR11829:SF402">
    <property type="entry name" value="FORK HEAD DOMAIN-CONTAINING PROTEIN FD3-RELATED"/>
    <property type="match status" value="1"/>
</dbReference>
<dbReference type="PANTHER" id="PTHR11829">
    <property type="entry name" value="FORKHEAD BOX PROTEIN"/>
    <property type="match status" value="1"/>
</dbReference>
<dbReference type="Pfam" id="PF00250">
    <property type="entry name" value="Forkhead"/>
    <property type="match status" value="1"/>
</dbReference>
<dbReference type="PRINTS" id="PR00053">
    <property type="entry name" value="FORKHEAD"/>
</dbReference>
<dbReference type="SMART" id="SM00339">
    <property type="entry name" value="FH"/>
    <property type="match status" value="1"/>
</dbReference>
<dbReference type="SUPFAM" id="SSF46785">
    <property type="entry name" value="Winged helix' DNA-binding domain"/>
    <property type="match status" value="1"/>
</dbReference>
<dbReference type="PROSITE" id="PS00658">
    <property type="entry name" value="FORK_HEAD_2"/>
    <property type="match status" value="1"/>
</dbReference>
<dbReference type="PROSITE" id="PS50039">
    <property type="entry name" value="FORK_HEAD_3"/>
    <property type="match status" value="1"/>
</dbReference>
<protein>
    <recommendedName>
        <fullName evidence="8">Forkhead box protein unc-130</fullName>
    </recommendedName>
    <alternativeName>
        <fullName evidence="10">Uncoordinated protein 130</fullName>
    </alternativeName>
</protein>
<accession>Q18694</accession>